<gene>
    <name type="primary">Btg3</name>
    <name type="synonym">Ana</name>
    <name type="synonym">Tob5</name>
</gene>
<reference key="1">
    <citation type="journal article" date="1997" name="Leukemia">
        <title>Cloning of the mouse BTG3 gene and definition of a new gene family (the BTG family) involved in the negative control of the cell cycle.</title>
        <authorList>
            <person name="Guehenneux F."/>
            <person name="Duret L."/>
            <person name="Callanan M.B."/>
            <person name="Bouhas R."/>
            <person name="Hayette S."/>
            <person name="Berthet C."/>
            <person name="Samarut C."/>
            <person name="Rimokh R."/>
            <person name="Birot A.-M."/>
            <person name="Wang Q."/>
            <person name="Magaud J.-P."/>
            <person name="Rouault J.-P."/>
        </authorList>
    </citation>
    <scope>NUCLEOTIDE SEQUENCE [MRNA]</scope>
    <scope>TISSUE SPECIFICITY</scope>
    <source>
        <tissue>Embryo</tissue>
    </source>
</reference>
<reference key="2">
    <citation type="journal article" date="1998" name="Oncogene">
        <title>ANA, a novel member of Tob/BTG1 family, is expressed in the ventricular zone of the developing central nervous system.</title>
        <authorList>
            <person name="Yoshida Y."/>
            <person name="Matsuda S."/>
            <person name="Ikematsu N."/>
            <person name="Kawamura-Tsuzuku J."/>
            <person name="Inazawa J."/>
            <person name="Umemori H."/>
            <person name="Yamamoto T."/>
        </authorList>
    </citation>
    <scope>NUCLEOTIDE SEQUENCE [MRNA]</scope>
    <source>
        <tissue>Testis</tissue>
    </source>
</reference>
<reference key="3">
    <citation type="journal article" date="2004" name="Genome Res.">
        <title>The status, quality, and expansion of the NIH full-length cDNA project: the Mammalian Gene Collection (MGC).</title>
        <authorList>
            <consortium name="The MGC Project Team"/>
        </authorList>
    </citation>
    <scope>NUCLEOTIDE SEQUENCE [LARGE SCALE MRNA]</scope>
    <source>
        <strain>FVB/N</strain>
        <tissue>Mammary gland</tissue>
    </source>
</reference>
<evidence type="ECO:0000256" key="1">
    <source>
        <dbReference type="SAM" id="MobiDB-lite"/>
    </source>
</evidence>
<evidence type="ECO:0000269" key="2">
    <source>
    </source>
</evidence>
<evidence type="ECO:0000305" key="3"/>
<name>BTG3_MOUSE</name>
<comment type="function">
    <text>Overexpression impairs serum-induced cell cycle progression from the G0/G1 to S phase.</text>
</comment>
<comment type="tissue specificity">
    <text evidence="2">Ubiquitous.</text>
</comment>
<comment type="similarity">
    <text evidence="3">Belongs to the BTG family.</text>
</comment>
<organism>
    <name type="scientific">Mus musculus</name>
    <name type="common">Mouse</name>
    <dbReference type="NCBI Taxonomy" id="10090"/>
    <lineage>
        <taxon>Eukaryota</taxon>
        <taxon>Metazoa</taxon>
        <taxon>Chordata</taxon>
        <taxon>Craniata</taxon>
        <taxon>Vertebrata</taxon>
        <taxon>Euteleostomi</taxon>
        <taxon>Mammalia</taxon>
        <taxon>Eutheria</taxon>
        <taxon>Euarchontoglires</taxon>
        <taxon>Glires</taxon>
        <taxon>Rodentia</taxon>
        <taxon>Myomorpha</taxon>
        <taxon>Muroidea</taxon>
        <taxon>Muridae</taxon>
        <taxon>Murinae</taxon>
        <taxon>Mus</taxon>
        <taxon>Mus</taxon>
    </lineage>
</organism>
<protein>
    <recommendedName>
        <fullName>Protein BTG3</fullName>
    </recommendedName>
    <alternativeName>
        <fullName>Abundant in neuroepithelium area protein</fullName>
    </alternativeName>
    <alternativeName>
        <fullName>BTG family member 3</fullName>
    </alternativeName>
    <alternativeName>
        <fullName>Protein Tob5</fullName>
    </alternativeName>
</protein>
<keyword id="KW-1185">Reference proteome</keyword>
<feature type="chain" id="PRO_0000143808" description="Protein BTG3">
    <location>
        <begin position="1"/>
        <end position="252"/>
    </location>
</feature>
<feature type="region of interest" description="Disordered" evidence="1">
    <location>
        <begin position="138"/>
        <end position="163"/>
    </location>
</feature>
<proteinExistence type="evidence at transcript level"/>
<dbReference type="EMBL" id="Z72000">
    <property type="protein sequence ID" value="CAA96519.1"/>
    <property type="molecule type" value="mRNA"/>
</dbReference>
<dbReference type="EMBL" id="D83745">
    <property type="protein sequence ID" value="BAA29058.1"/>
    <property type="molecule type" value="mRNA"/>
</dbReference>
<dbReference type="EMBL" id="BC012705">
    <property type="protein sequence ID" value="AAH12705.1"/>
    <property type="molecule type" value="mRNA"/>
</dbReference>
<dbReference type="CCDS" id="CCDS28277.1"/>
<dbReference type="RefSeq" id="NP_001284676.1">
    <property type="nucleotide sequence ID" value="NM_001297747.1"/>
</dbReference>
<dbReference type="RefSeq" id="NP_033900.1">
    <property type="nucleotide sequence ID" value="NM_009770.3"/>
</dbReference>
<dbReference type="SMR" id="P50615"/>
<dbReference type="BioGRID" id="198399">
    <property type="interactions" value="2"/>
</dbReference>
<dbReference type="DIP" id="DIP-61989N"/>
<dbReference type="FunCoup" id="P50615">
    <property type="interactions" value="2083"/>
</dbReference>
<dbReference type="IntAct" id="P50615">
    <property type="interactions" value="1"/>
</dbReference>
<dbReference type="STRING" id="10090.ENSMUSP00000023570"/>
<dbReference type="GlyGen" id="P50615">
    <property type="glycosylation" value="1 site"/>
</dbReference>
<dbReference type="PhosphoSitePlus" id="P50615"/>
<dbReference type="PaxDb" id="10090-ENSMUSP00000023570"/>
<dbReference type="ProteomicsDB" id="273714"/>
<dbReference type="Antibodypedia" id="5926">
    <property type="antibodies" value="132 antibodies from 25 providers"/>
</dbReference>
<dbReference type="Ensembl" id="ENSMUST00000023570.14">
    <property type="protein sequence ID" value="ENSMUSP00000023570.8"/>
    <property type="gene ID" value="ENSMUSG00000022863.16"/>
</dbReference>
<dbReference type="GeneID" id="12228"/>
<dbReference type="KEGG" id="mmu:12228"/>
<dbReference type="UCSC" id="uc007zsp.2">
    <property type="organism name" value="mouse"/>
</dbReference>
<dbReference type="AGR" id="MGI:109532"/>
<dbReference type="CTD" id="10950"/>
<dbReference type="MGI" id="MGI:109532">
    <property type="gene designation" value="Btg3"/>
</dbReference>
<dbReference type="VEuPathDB" id="HostDB:ENSMUSG00000022863"/>
<dbReference type="eggNOG" id="KOG4006">
    <property type="taxonomic scope" value="Eukaryota"/>
</dbReference>
<dbReference type="GeneTree" id="ENSGT00950000182952"/>
<dbReference type="HOGENOM" id="CLU_079660_3_0_1"/>
<dbReference type="InParanoid" id="P50615"/>
<dbReference type="OMA" id="HYGYRPR"/>
<dbReference type="OrthoDB" id="19928at2759"/>
<dbReference type="PhylomeDB" id="P50615"/>
<dbReference type="TreeFam" id="TF105272"/>
<dbReference type="BioGRID-ORCS" id="12228">
    <property type="hits" value="3 hits in 79 CRISPR screens"/>
</dbReference>
<dbReference type="ChiTaRS" id="Btg3">
    <property type="organism name" value="mouse"/>
</dbReference>
<dbReference type="PRO" id="PR:P50615"/>
<dbReference type="Proteomes" id="UP000000589">
    <property type="component" value="Chromosome 16"/>
</dbReference>
<dbReference type="RNAct" id="P50615">
    <property type="molecule type" value="protein"/>
</dbReference>
<dbReference type="Bgee" id="ENSMUSG00000022863">
    <property type="expression patterns" value="Expressed in pancreas and 131 other cell types or tissues"/>
</dbReference>
<dbReference type="ExpressionAtlas" id="P50615">
    <property type="expression patterns" value="baseline and differential"/>
</dbReference>
<dbReference type="GO" id="GO:0005737">
    <property type="term" value="C:cytoplasm"/>
    <property type="evidence" value="ECO:0000266"/>
    <property type="project" value="MGI"/>
</dbReference>
<dbReference type="GO" id="GO:0045930">
    <property type="term" value="P:negative regulation of mitotic cell cycle"/>
    <property type="evidence" value="ECO:0000266"/>
    <property type="project" value="MGI"/>
</dbReference>
<dbReference type="FunFam" id="3.90.640.90:FF:000002">
    <property type="entry name" value="BTG anti-proliferation factor 4"/>
    <property type="match status" value="1"/>
</dbReference>
<dbReference type="Gene3D" id="3.90.640.90">
    <property type="entry name" value="Anti-proliferative protein, N-terminal domain"/>
    <property type="match status" value="1"/>
</dbReference>
<dbReference type="InterPro" id="IPR002087">
    <property type="entry name" value="Anti_prolifrtn"/>
</dbReference>
<dbReference type="InterPro" id="IPR033332">
    <property type="entry name" value="BTG"/>
</dbReference>
<dbReference type="InterPro" id="IPR036054">
    <property type="entry name" value="BTG-like_sf"/>
</dbReference>
<dbReference type="PANTHER" id="PTHR22978">
    <property type="entry name" value="B-CELL TRANSLOCATION GENE"/>
    <property type="match status" value="1"/>
</dbReference>
<dbReference type="PANTHER" id="PTHR22978:SF6">
    <property type="entry name" value="PROTEIN BTG3"/>
    <property type="match status" value="1"/>
</dbReference>
<dbReference type="Pfam" id="PF07742">
    <property type="entry name" value="BTG"/>
    <property type="match status" value="1"/>
</dbReference>
<dbReference type="PRINTS" id="PR00310">
    <property type="entry name" value="ANTIPRLFBTG1"/>
</dbReference>
<dbReference type="SMART" id="SM00099">
    <property type="entry name" value="btg1"/>
    <property type="match status" value="1"/>
</dbReference>
<dbReference type="SUPFAM" id="SSF160696">
    <property type="entry name" value="BTG domain-like"/>
    <property type="match status" value="1"/>
</dbReference>
<dbReference type="PROSITE" id="PS00960">
    <property type="entry name" value="BTG_1"/>
    <property type="match status" value="1"/>
</dbReference>
<dbReference type="PROSITE" id="PS01203">
    <property type="entry name" value="BTG_2"/>
    <property type="match status" value="1"/>
</dbReference>
<sequence length="252" mass="28983">MKNEIAAVVFFFTRLVRKHDKLKKEAVERFAEKLTQILQEKYKNHWYPEKPSKGQAYRCIRVNKFQRVDPDVLKACENSCILYSDLGLPKELTLWVDPCEVCCRYGEKNNAFIVASFENEDENKDEISKKVSRALDKVTSDYHSGSSSSDEDTSKEVDVKPSSVAATPSPVYQISELIFPPLPMWHPLPRKKPGMYRGSGHQTHYPPPVPFAYPNPGRKNKPFRPIPVTWVPPPGMHCDRNHWINPHMLAPH</sequence>
<accession>P50615</accession>
<accession>Q62328</accession>